<gene>
    <name evidence="1" type="primary">atpF2</name>
    <name type="ordered locus">Nmul_A1655</name>
</gene>
<protein>
    <recommendedName>
        <fullName evidence="1">ATP synthase subunit b 2</fullName>
    </recommendedName>
    <alternativeName>
        <fullName evidence="1">ATP synthase F(0) sector subunit b 2</fullName>
    </alternativeName>
    <alternativeName>
        <fullName evidence="1">ATPase subunit I 2</fullName>
    </alternativeName>
    <alternativeName>
        <fullName evidence="1">F-type ATPase subunit b 2</fullName>
        <shortName evidence="1">F-ATPase subunit b 2</shortName>
    </alternativeName>
</protein>
<evidence type="ECO:0000255" key="1">
    <source>
        <dbReference type="HAMAP-Rule" id="MF_01398"/>
    </source>
</evidence>
<dbReference type="EMBL" id="CP000103">
    <property type="protein sequence ID" value="ABB74953.1"/>
    <property type="molecule type" value="Genomic_DNA"/>
</dbReference>
<dbReference type="RefSeq" id="WP_011380976.1">
    <property type="nucleotide sequence ID" value="NC_007614.1"/>
</dbReference>
<dbReference type="SMR" id="Q2Y8G8"/>
<dbReference type="STRING" id="323848.Nmul_A1655"/>
<dbReference type="KEGG" id="nmu:Nmul_A1655"/>
<dbReference type="eggNOG" id="COG0711">
    <property type="taxonomic scope" value="Bacteria"/>
</dbReference>
<dbReference type="eggNOG" id="COG0712">
    <property type="taxonomic scope" value="Bacteria"/>
</dbReference>
<dbReference type="HOGENOM" id="CLU_070737_0_0_4"/>
<dbReference type="OrthoDB" id="466272at2"/>
<dbReference type="Proteomes" id="UP000002718">
    <property type="component" value="Chromosome"/>
</dbReference>
<dbReference type="GO" id="GO:0005886">
    <property type="term" value="C:plasma membrane"/>
    <property type="evidence" value="ECO:0007669"/>
    <property type="project" value="UniProtKB-SubCell"/>
</dbReference>
<dbReference type="GO" id="GO:0045259">
    <property type="term" value="C:proton-transporting ATP synthase complex"/>
    <property type="evidence" value="ECO:0007669"/>
    <property type="project" value="UniProtKB-KW"/>
</dbReference>
<dbReference type="GO" id="GO:0046933">
    <property type="term" value="F:proton-transporting ATP synthase activity, rotational mechanism"/>
    <property type="evidence" value="ECO:0007669"/>
    <property type="project" value="UniProtKB-UniRule"/>
</dbReference>
<dbReference type="GO" id="GO:0046961">
    <property type="term" value="F:proton-transporting ATPase activity, rotational mechanism"/>
    <property type="evidence" value="ECO:0007669"/>
    <property type="project" value="TreeGrafter"/>
</dbReference>
<dbReference type="CDD" id="cd06503">
    <property type="entry name" value="ATP-synt_Fo_b"/>
    <property type="match status" value="1"/>
</dbReference>
<dbReference type="HAMAP" id="MF_01398">
    <property type="entry name" value="ATP_synth_b_bprime"/>
    <property type="match status" value="1"/>
</dbReference>
<dbReference type="InterPro" id="IPR017707">
    <property type="entry name" value="Alt_ATP_synth_F0_bsu"/>
</dbReference>
<dbReference type="InterPro" id="IPR002146">
    <property type="entry name" value="ATP_synth_b/b'su_bac/chlpt"/>
</dbReference>
<dbReference type="InterPro" id="IPR050059">
    <property type="entry name" value="ATP_synthase_B_chain"/>
</dbReference>
<dbReference type="InterPro" id="IPR000711">
    <property type="entry name" value="ATPase_OSCP/dsu"/>
</dbReference>
<dbReference type="NCBIfam" id="TIGR03321">
    <property type="entry name" value="alt_F1F0_F0_B"/>
    <property type="match status" value="1"/>
</dbReference>
<dbReference type="PANTHER" id="PTHR33445">
    <property type="entry name" value="ATP SYNTHASE SUBUNIT B', CHLOROPLASTIC"/>
    <property type="match status" value="1"/>
</dbReference>
<dbReference type="PANTHER" id="PTHR33445:SF2">
    <property type="entry name" value="ATP SYNTHASE SUBUNIT B', CHLOROPLASTIC"/>
    <property type="match status" value="1"/>
</dbReference>
<dbReference type="Pfam" id="PF00430">
    <property type="entry name" value="ATP-synt_B"/>
    <property type="match status" value="1"/>
</dbReference>
<dbReference type="Pfam" id="PF00213">
    <property type="entry name" value="OSCP"/>
    <property type="match status" value="1"/>
</dbReference>
<keyword id="KW-0066">ATP synthesis</keyword>
<keyword id="KW-0997">Cell inner membrane</keyword>
<keyword id="KW-1003">Cell membrane</keyword>
<keyword id="KW-0138">CF(0)</keyword>
<keyword id="KW-0375">Hydrogen ion transport</keyword>
<keyword id="KW-0406">Ion transport</keyword>
<keyword id="KW-0472">Membrane</keyword>
<keyword id="KW-1185">Reference proteome</keyword>
<keyword id="KW-0812">Transmembrane</keyword>
<keyword id="KW-1133">Transmembrane helix</keyword>
<keyword id="KW-0813">Transport</keyword>
<accession>Q2Y8G8</accession>
<comment type="function">
    <text evidence="1">F(1)F(0) ATP synthase produces ATP from ADP in the presence of a proton or sodium gradient. F-type ATPases consist of two structural domains, F(1) containing the extramembraneous catalytic core and F(0) containing the membrane proton channel, linked together by a central stalk and a peripheral stalk. During catalysis, ATP synthesis in the catalytic domain of F(1) is coupled via a rotary mechanism of the central stalk subunits to proton translocation.</text>
</comment>
<comment type="function">
    <text evidence="1">Component of the F(0) channel, it forms part of the peripheral stalk, linking F(1) to F(0).</text>
</comment>
<comment type="subunit">
    <text evidence="1">F-type ATPases have 2 components, F(1) - the catalytic core - and F(0) - the membrane proton channel. F(1) has five subunits: alpha(3), beta(3), gamma(1), delta(1), epsilon(1). F(0) has three main subunits: a(1), b(2) and c(10-14). The alpha and beta chains form an alternating ring which encloses part of the gamma chain. F(1) is attached to F(0) by a central stalk formed by the gamma and epsilon chains, while a peripheral stalk is formed by the delta and b chains.</text>
</comment>
<comment type="subcellular location">
    <subcellularLocation>
        <location evidence="1">Cell inner membrane</location>
        <topology evidence="1">Single-pass membrane protein</topology>
    </subcellularLocation>
</comment>
<comment type="similarity">
    <text evidence="1">Belongs to the ATPase B chain family.</text>
</comment>
<feature type="chain" id="PRO_0000368632" description="ATP synthase subunit b 2">
    <location>
        <begin position="1"/>
        <end position="291"/>
    </location>
</feature>
<feature type="transmembrane region" description="Helical" evidence="1">
    <location>
        <begin position="2"/>
        <end position="22"/>
    </location>
</feature>
<reference key="1">
    <citation type="submission" date="2005-08" db="EMBL/GenBank/DDBJ databases">
        <title>Complete sequence of chromosome 1 of Nitrosospira multiformis ATCC 25196.</title>
        <authorList>
            <person name="Copeland A."/>
            <person name="Lucas S."/>
            <person name="Lapidus A."/>
            <person name="Barry K."/>
            <person name="Detter J.C."/>
            <person name="Glavina T."/>
            <person name="Hammon N."/>
            <person name="Israni S."/>
            <person name="Pitluck S."/>
            <person name="Chain P."/>
            <person name="Malfatti S."/>
            <person name="Shin M."/>
            <person name="Vergez L."/>
            <person name="Schmutz J."/>
            <person name="Larimer F."/>
            <person name="Land M."/>
            <person name="Hauser L."/>
            <person name="Kyrpides N."/>
            <person name="Lykidis A."/>
            <person name="Richardson P."/>
        </authorList>
    </citation>
    <scope>NUCLEOTIDE SEQUENCE [LARGE SCALE GENOMIC DNA]</scope>
    <source>
        <strain>ATCC 25196 / NCIMB 11849 / C 71</strain>
    </source>
</reference>
<organism>
    <name type="scientific">Nitrosospira multiformis (strain ATCC 25196 / NCIMB 11849 / C 71)</name>
    <dbReference type="NCBI Taxonomy" id="323848"/>
    <lineage>
        <taxon>Bacteria</taxon>
        <taxon>Pseudomonadati</taxon>
        <taxon>Pseudomonadota</taxon>
        <taxon>Betaproteobacteria</taxon>
        <taxon>Nitrosomonadales</taxon>
        <taxon>Nitrosomonadaceae</taxon>
        <taxon>Nitrosospira</taxon>
    </lineage>
</organism>
<name>ATPF2_NITMU</name>
<proteinExistence type="inferred from homology"/>
<sequence>MLIDGFTVVAQIVNFLILVWLLKRFFYRPILDALDERENRIASELAAATGKQREAEAELHRFRQKNEEFDQRREVLLTTVTDEVRAERQRLMEAAHADADRIRISRNEAQQREYQVLHDAIERRTCAEVLAITRKVLADLAGTTLEIHMTEAFIRRLRTLGPEEKAQLAVALQAGGVESGHSATFQVFPPIVGQGSPSGIAVILVRSAFELPAEQQEKISTVIRETLKEEVRFNFGVEPNLISGIEMIAGGHKVAWSVAGYLASLEEEVSRLLNAKGAVGEGEAKSSTAAL</sequence>